<evidence type="ECO:0000255" key="1">
    <source>
        <dbReference type="HAMAP-Rule" id="MF_00074"/>
    </source>
</evidence>
<proteinExistence type="inferred from homology"/>
<protein>
    <recommendedName>
        <fullName evidence="1">Ribosomal RNA small subunit methyltransferase G</fullName>
        <ecNumber evidence="1">2.1.1.-</ecNumber>
    </recommendedName>
    <alternativeName>
        <fullName evidence="1">16S rRNA 7-methylguanosine methyltransferase</fullName>
        <shortName evidence="1">16S rRNA m7G methyltransferase</shortName>
    </alternativeName>
</protein>
<keyword id="KW-0963">Cytoplasm</keyword>
<keyword id="KW-0489">Methyltransferase</keyword>
<keyword id="KW-0698">rRNA processing</keyword>
<keyword id="KW-0949">S-adenosyl-L-methionine</keyword>
<keyword id="KW-0808">Transferase</keyword>
<feature type="chain" id="PRO_1000118199" description="Ribosomal RNA small subunit methyltransferase G">
    <location>
        <begin position="1"/>
        <end position="237"/>
    </location>
</feature>
<feature type="binding site" evidence="1">
    <location>
        <position position="78"/>
    </location>
    <ligand>
        <name>S-adenosyl-L-methionine</name>
        <dbReference type="ChEBI" id="CHEBI:59789"/>
    </ligand>
</feature>
<feature type="binding site" evidence="1">
    <location>
        <position position="83"/>
    </location>
    <ligand>
        <name>S-adenosyl-L-methionine</name>
        <dbReference type="ChEBI" id="CHEBI:59789"/>
    </ligand>
</feature>
<feature type="binding site" evidence="1">
    <location>
        <begin position="129"/>
        <end position="130"/>
    </location>
    <ligand>
        <name>S-adenosyl-L-methionine</name>
        <dbReference type="ChEBI" id="CHEBI:59789"/>
    </ligand>
</feature>
<feature type="binding site" evidence="1">
    <location>
        <position position="148"/>
    </location>
    <ligand>
        <name>S-adenosyl-L-methionine</name>
        <dbReference type="ChEBI" id="CHEBI:59789"/>
    </ligand>
</feature>
<dbReference type="EC" id="2.1.1.-" evidence="1"/>
<dbReference type="EMBL" id="FM204883">
    <property type="protein sequence ID" value="CAW95086.1"/>
    <property type="molecule type" value="Genomic_DNA"/>
</dbReference>
<dbReference type="RefSeq" id="WP_012680073.1">
    <property type="nucleotide sequence ID" value="NC_012471.1"/>
</dbReference>
<dbReference type="SMR" id="C0M821"/>
<dbReference type="KEGG" id="seu:SEQ_1894"/>
<dbReference type="HOGENOM" id="CLU_065341_0_2_9"/>
<dbReference type="OrthoDB" id="9808773at2"/>
<dbReference type="Proteomes" id="UP000001365">
    <property type="component" value="Chromosome"/>
</dbReference>
<dbReference type="GO" id="GO:0005829">
    <property type="term" value="C:cytosol"/>
    <property type="evidence" value="ECO:0007669"/>
    <property type="project" value="TreeGrafter"/>
</dbReference>
<dbReference type="GO" id="GO:0070043">
    <property type="term" value="F:rRNA (guanine-N7-)-methyltransferase activity"/>
    <property type="evidence" value="ECO:0007669"/>
    <property type="project" value="UniProtKB-UniRule"/>
</dbReference>
<dbReference type="CDD" id="cd02440">
    <property type="entry name" value="AdoMet_MTases"/>
    <property type="match status" value="1"/>
</dbReference>
<dbReference type="FunFam" id="3.40.50.150:FF:000041">
    <property type="entry name" value="Ribosomal RNA small subunit methyltransferase G"/>
    <property type="match status" value="1"/>
</dbReference>
<dbReference type="Gene3D" id="3.40.50.150">
    <property type="entry name" value="Vaccinia Virus protein VP39"/>
    <property type="match status" value="1"/>
</dbReference>
<dbReference type="HAMAP" id="MF_00074">
    <property type="entry name" value="16SrRNA_methyltr_G"/>
    <property type="match status" value="1"/>
</dbReference>
<dbReference type="InterPro" id="IPR003682">
    <property type="entry name" value="rRNA_ssu_MeTfrase_G"/>
</dbReference>
<dbReference type="InterPro" id="IPR029063">
    <property type="entry name" value="SAM-dependent_MTases_sf"/>
</dbReference>
<dbReference type="NCBIfam" id="TIGR00138">
    <property type="entry name" value="rsmG_gidB"/>
    <property type="match status" value="1"/>
</dbReference>
<dbReference type="PANTHER" id="PTHR31760">
    <property type="entry name" value="S-ADENOSYL-L-METHIONINE-DEPENDENT METHYLTRANSFERASES SUPERFAMILY PROTEIN"/>
    <property type="match status" value="1"/>
</dbReference>
<dbReference type="PANTHER" id="PTHR31760:SF0">
    <property type="entry name" value="S-ADENOSYL-L-METHIONINE-DEPENDENT METHYLTRANSFERASES SUPERFAMILY PROTEIN"/>
    <property type="match status" value="1"/>
</dbReference>
<dbReference type="Pfam" id="PF02527">
    <property type="entry name" value="GidB"/>
    <property type="match status" value="1"/>
</dbReference>
<dbReference type="PIRSF" id="PIRSF003078">
    <property type="entry name" value="GidB"/>
    <property type="match status" value="1"/>
</dbReference>
<dbReference type="SUPFAM" id="SSF53335">
    <property type="entry name" value="S-adenosyl-L-methionine-dependent methyltransferases"/>
    <property type="match status" value="1"/>
</dbReference>
<gene>
    <name evidence="1" type="primary">rsmG</name>
    <name type="ordered locus">SEQ_1894</name>
</gene>
<sequence length="237" mass="27064">MTPQAFYLVLEQAGFALTNHQKEQFDTYFKLLVDWNRKINLTAITEENEVYLKHFYDSVAPLLQGYIPNEPLRLLDIGAGAGFPSIPMKIMFPKLDVTIIDSLNKRIHFLQLLAKELGLEGVHFYHGRAEDFGQDKQFRGQFDLVTARAVARMQILSELTIPFLKIKGKLIALKAQAADQELEEAKKALQLLFAKVLDHQPYQLPNGDGRYITLVEKKKETPNKYPRKAGIPNKKPL</sequence>
<accession>C0M821</accession>
<comment type="function">
    <text evidence="1">Specifically methylates the N7 position of a guanine in 16S rRNA.</text>
</comment>
<comment type="subcellular location">
    <subcellularLocation>
        <location evidence="1">Cytoplasm</location>
    </subcellularLocation>
</comment>
<comment type="similarity">
    <text evidence="1">Belongs to the methyltransferase superfamily. RNA methyltransferase RsmG family.</text>
</comment>
<name>RSMG_STRE4</name>
<reference key="1">
    <citation type="journal article" date="2009" name="PLoS Pathog.">
        <title>Genomic evidence for the evolution of Streptococcus equi: host restriction, increased virulence, and genetic exchange with human pathogens.</title>
        <authorList>
            <person name="Holden M.T.G."/>
            <person name="Heather Z."/>
            <person name="Paillot R."/>
            <person name="Steward K.F."/>
            <person name="Webb K."/>
            <person name="Ainslie F."/>
            <person name="Jourdan T."/>
            <person name="Bason N.C."/>
            <person name="Holroyd N.E."/>
            <person name="Mungall K."/>
            <person name="Quail M.A."/>
            <person name="Sanders M."/>
            <person name="Simmonds M."/>
            <person name="Willey D."/>
            <person name="Brooks K."/>
            <person name="Aanensen D.M."/>
            <person name="Spratt B.G."/>
            <person name="Jolley K.A."/>
            <person name="Maiden M.C.J."/>
            <person name="Kehoe M."/>
            <person name="Chanter N."/>
            <person name="Bentley S.D."/>
            <person name="Robinson C."/>
            <person name="Maskell D.J."/>
            <person name="Parkhill J."/>
            <person name="Waller A.S."/>
        </authorList>
    </citation>
    <scope>NUCLEOTIDE SEQUENCE [LARGE SCALE GENOMIC DNA]</scope>
    <source>
        <strain>4047</strain>
    </source>
</reference>
<organism>
    <name type="scientific">Streptococcus equi subsp. equi (strain 4047)</name>
    <dbReference type="NCBI Taxonomy" id="553482"/>
    <lineage>
        <taxon>Bacteria</taxon>
        <taxon>Bacillati</taxon>
        <taxon>Bacillota</taxon>
        <taxon>Bacilli</taxon>
        <taxon>Lactobacillales</taxon>
        <taxon>Streptococcaceae</taxon>
        <taxon>Streptococcus</taxon>
    </lineage>
</organism>